<keyword id="KW-0002">3D-structure</keyword>
<keyword id="KW-0215">Deoxyribonucleotide synthesis</keyword>
<keyword id="KW-0903">Direct protein sequencing</keyword>
<keyword id="KW-1015">Disulfide bond</keyword>
<keyword id="KW-0249">Electron transport</keyword>
<keyword id="KW-0676">Redox-active center</keyword>
<keyword id="KW-1185">Reference proteome</keyword>
<keyword id="KW-0813">Transport</keyword>
<proteinExistence type="evidence at protein level"/>
<accession>P0AC62</accession>
<accession>P37687</accession>
<accession>Q2M7S4</accession>
<sequence>MANVEIYTKETCPYCHRAKALLSSKGVSFQELPIDGNAAKREEMIKRSGRTTVPQIFIDAQHIGGCDDLYALDARGGLDPLLK</sequence>
<comment type="function">
    <text>The disulfide bond functions as an electron carrier in the glutathione-dependent synthesis of deoxyribonucleotides by the enzyme ribonucleotide reductase. In addition, it is also involved in reducing some disulfide bonds in a coupled system with glutathione reductase.</text>
</comment>
<comment type="subunit">
    <text evidence="5">Monomer.</text>
</comment>
<comment type="similarity">
    <text evidence="5">Belongs to the glutaredoxin family.</text>
</comment>
<gene>
    <name type="primary">grxC</name>
    <name type="synonym">yibM</name>
    <name type="ordered locus">b3610</name>
    <name type="ordered locus">JW3585</name>
</gene>
<organism>
    <name type="scientific">Escherichia coli (strain K12)</name>
    <dbReference type="NCBI Taxonomy" id="83333"/>
    <lineage>
        <taxon>Bacteria</taxon>
        <taxon>Pseudomonadati</taxon>
        <taxon>Pseudomonadota</taxon>
        <taxon>Gammaproteobacteria</taxon>
        <taxon>Enterobacterales</taxon>
        <taxon>Enterobacteriaceae</taxon>
        <taxon>Escherichia</taxon>
    </lineage>
</organism>
<evidence type="ECO:0000250" key="1"/>
<evidence type="ECO:0000255" key="2">
    <source>
        <dbReference type="PROSITE-ProRule" id="PRU00686"/>
    </source>
</evidence>
<evidence type="ECO:0000269" key="3">
    <source>
    </source>
</evidence>
<evidence type="ECO:0000269" key="4">
    <source>
    </source>
</evidence>
<evidence type="ECO:0000305" key="5"/>
<evidence type="ECO:0007829" key="6">
    <source>
        <dbReference type="PDB" id="1FOV"/>
    </source>
</evidence>
<dbReference type="EMBL" id="U00039">
    <property type="protein sequence ID" value="AAB18587.1"/>
    <property type="molecule type" value="Genomic_DNA"/>
</dbReference>
<dbReference type="EMBL" id="U00096">
    <property type="protein sequence ID" value="AAC76634.1"/>
    <property type="molecule type" value="Genomic_DNA"/>
</dbReference>
<dbReference type="EMBL" id="AP009048">
    <property type="protein sequence ID" value="BAE77682.1"/>
    <property type="molecule type" value="Genomic_DNA"/>
</dbReference>
<dbReference type="PIR" id="S47831">
    <property type="entry name" value="S47831"/>
</dbReference>
<dbReference type="RefSeq" id="NP_418067.1">
    <property type="nucleotide sequence ID" value="NC_000913.3"/>
</dbReference>
<dbReference type="RefSeq" id="WP_000024392.1">
    <property type="nucleotide sequence ID" value="NZ_STEB01000024.1"/>
</dbReference>
<dbReference type="PDB" id="1FOV">
    <property type="method" value="NMR"/>
    <property type="chains" value="A=2-83"/>
</dbReference>
<dbReference type="PDB" id="3GRX">
    <property type="method" value="NMR"/>
    <property type="chains" value="A=2-83"/>
</dbReference>
<dbReference type="PDBsum" id="1FOV"/>
<dbReference type="PDBsum" id="3GRX"/>
<dbReference type="BMRB" id="P0AC62"/>
<dbReference type="SMR" id="P0AC62"/>
<dbReference type="BioGRID" id="4263295">
    <property type="interactions" value="23"/>
</dbReference>
<dbReference type="BioGRID" id="852439">
    <property type="interactions" value="1"/>
</dbReference>
<dbReference type="FunCoup" id="P0AC62">
    <property type="interactions" value="536"/>
</dbReference>
<dbReference type="IntAct" id="P0AC62">
    <property type="interactions" value="2"/>
</dbReference>
<dbReference type="STRING" id="511145.b3610"/>
<dbReference type="jPOST" id="P0AC62"/>
<dbReference type="PaxDb" id="511145-b3610"/>
<dbReference type="EnsemblBacteria" id="AAC76634">
    <property type="protein sequence ID" value="AAC76634"/>
    <property type="gene ID" value="b3610"/>
</dbReference>
<dbReference type="GeneID" id="93778324"/>
<dbReference type="GeneID" id="948132"/>
<dbReference type="KEGG" id="ecj:JW3585"/>
<dbReference type="KEGG" id="eco:b3610"/>
<dbReference type="KEGG" id="ecoc:C3026_19575"/>
<dbReference type="PATRIC" id="fig|1411691.4.peg.3096"/>
<dbReference type="EchoBASE" id="EB2202"/>
<dbReference type="eggNOG" id="COG0695">
    <property type="taxonomic scope" value="Bacteria"/>
</dbReference>
<dbReference type="HOGENOM" id="CLU_026126_7_3_6"/>
<dbReference type="InParanoid" id="P0AC62"/>
<dbReference type="OMA" id="IYTSPLC"/>
<dbReference type="OrthoDB" id="9814618at2"/>
<dbReference type="PhylomeDB" id="P0AC62"/>
<dbReference type="BioCyc" id="EcoCyc:GRXC-MONOMER"/>
<dbReference type="BioCyc" id="MetaCyc:GRXC-MONOMER"/>
<dbReference type="SABIO-RK" id="P0AC62"/>
<dbReference type="EvolutionaryTrace" id="P0AC62"/>
<dbReference type="PRO" id="PR:P0AC62"/>
<dbReference type="Proteomes" id="UP000000625">
    <property type="component" value="Chromosome"/>
</dbReference>
<dbReference type="GO" id="GO:0005737">
    <property type="term" value="C:cytoplasm"/>
    <property type="evidence" value="ECO:0000318"/>
    <property type="project" value="GO_Central"/>
</dbReference>
<dbReference type="GO" id="GO:0005829">
    <property type="term" value="C:cytosol"/>
    <property type="evidence" value="ECO:0000314"/>
    <property type="project" value="EcoCyc"/>
</dbReference>
<dbReference type="GO" id="GO:0043295">
    <property type="term" value="F:glutathione binding"/>
    <property type="evidence" value="ECO:0000314"/>
    <property type="project" value="EcoCyc"/>
</dbReference>
<dbReference type="GO" id="GO:0015038">
    <property type="term" value="F:glutathione disulfide oxidoreductase activity"/>
    <property type="evidence" value="ECO:0000318"/>
    <property type="project" value="GO_Central"/>
</dbReference>
<dbReference type="GO" id="GO:0015035">
    <property type="term" value="F:protein-disulfide reductase activity"/>
    <property type="evidence" value="ECO:0000314"/>
    <property type="project" value="EcoCyc"/>
</dbReference>
<dbReference type="GO" id="GO:0045454">
    <property type="term" value="P:cell redox homeostasis"/>
    <property type="evidence" value="ECO:0007669"/>
    <property type="project" value="InterPro"/>
</dbReference>
<dbReference type="GO" id="GO:0034599">
    <property type="term" value="P:cellular response to oxidative stress"/>
    <property type="evidence" value="ECO:0000318"/>
    <property type="project" value="GO_Central"/>
</dbReference>
<dbReference type="GO" id="GO:0009263">
    <property type="term" value="P:deoxyribonucleotide biosynthetic process"/>
    <property type="evidence" value="ECO:0007669"/>
    <property type="project" value="UniProtKB-KW"/>
</dbReference>
<dbReference type="CDD" id="cd03418">
    <property type="entry name" value="GRX_GRXb_1_3_like"/>
    <property type="match status" value="1"/>
</dbReference>
<dbReference type="FunFam" id="3.40.30.10:FF:000018">
    <property type="entry name" value="Glutaredoxin"/>
    <property type="match status" value="1"/>
</dbReference>
<dbReference type="Gene3D" id="3.40.30.10">
    <property type="entry name" value="Glutaredoxin"/>
    <property type="match status" value="1"/>
</dbReference>
<dbReference type="InterPro" id="IPR011767">
    <property type="entry name" value="GLR_AS"/>
</dbReference>
<dbReference type="InterPro" id="IPR002109">
    <property type="entry name" value="Glutaredoxin"/>
</dbReference>
<dbReference type="InterPro" id="IPR014025">
    <property type="entry name" value="Glutaredoxin_subgr"/>
</dbReference>
<dbReference type="InterPro" id="IPR011900">
    <property type="entry name" value="GRX_bact"/>
</dbReference>
<dbReference type="InterPro" id="IPR036249">
    <property type="entry name" value="Thioredoxin-like_sf"/>
</dbReference>
<dbReference type="NCBIfam" id="TIGR02181">
    <property type="entry name" value="GRX_bact"/>
    <property type="match status" value="1"/>
</dbReference>
<dbReference type="NCBIfam" id="NF007923">
    <property type="entry name" value="PRK10638.1"/>
    <property type="match status" value="1"/>
</dbReference>
<dbReference type="PANTHER" id="PTHR45694">
    <property type="entry name" value="GLUTAREDOXIN 2"/>
    <property type="match status" value="1"/>
</dbReference>
<dbReference type="PANTHER" id="PTHR45694:SF18">
    <property type="entry name" value="GLUTAREDOXIN-1-RELATED"/>
    <property type="match status" value="1"/>
</dbReference>
<dbReference type="Pfam" id="PF00462">
    <property type="entry name" value="Glutaredoxin"/>
    <property type="match status" value="1"/>
</dbReference>
<dbReference type="PRINTS" id="PR00160">
    <property type="entry name" value="GLUTAREDOXIN"/>
</dbReference>
<dbReference type="SUPFAM" id="SSF52833">
    <property type="entry name" value="Thioredoxin-like"/>
    <property type="match status" value="1"/>
</dbReference>
<dbReference type="PROSITE" id="PS00195">
    <property type="entry name" value="GLUTAREDOXIN_1"/>
    <property type="match status" value="1"/>
</dbReference>
<dbReference type="PROSITE" id="PS51354">
    <property type="entry name" value="GLUTAREDOXIN_2"/>
    <property type="match status" value="1"/>
</dbReference>
<protein>
    <recommendedName>
        <fullName>Glutaredoxin 3</fullName>
        <shortName>Grx3</shortName>
    </recommendedName>
</protein>
<reference key="1">
    <citation type="journal article" date="1994" name="Nucleic Acids Res.">
        <title>Analysis of the Escherichia coli genome. V. DNA sequence of the region from 76.0 to 81.5 minutes.</title>
        <authorList>
            <person name="Sofia H.J."/>
            <person name="Burland V."/>
            <person name="Daniels D.L."/>
            <person name="Plunkett G. III"/>
            <person name="Blattner F.R."/>
        </authorList>
    </citation>
    <scope>NUCLEOTIDE SEQUENCE [LARGE SCALE GENOMIC DNA]</scope>
    <source>
        <strain>K12 / MG1655 / ATCC 47076</strain>
    </source>
</reference>
<reference key="2">
    <citation type="journal article" date="1997" name="Science">
        <title>The complete genome sequence of Escherichia coli K-12.</title>
        <authorList>
            <person name="Blattner F.R."/>
            <person name="Plunkett G. III"/>
            <person name="Bloch C.A."/>
            <person name="Perna N.T."/>
            <person name="Burland V."/>
            <person name="Riley M."/>
            <person name="Collado-Vides J."/>
            <person name="Glasner J.D."/>
            <person name="Rode C.K."/>
            <person name="Mayhew G.F."/>
            <person name="Gregor J."/>
            <person name="Davis N.W."/>
            <person name="Kirkpatrick H.A."/>
            <person name="Goeden M.A."/>
            <person name="Rose D.J."/>
            <person name="Mau B."/>
            <person name="Shao Y."/>
        </authorList>
    </citation>
    <scope>NUCLEOTIDE SEQUENCE [LARGE SCALE GENOMIC DNA]</scope>
    <source>
        <strain>K12 / MG1655 / ATCC 47076</strain>
    </source>
</reference>
<reference key="3">
    <citation type="journal article" date="2006" name="Mol. Syst. Biol.">
        <title>Highly accurate genome sequences of Escherichia coli K-12 strains MG1655 and W3110.</title>
        <authorList>
            <person name="Hayashi K."/>
            <person name="Morooka N."/>
            <person name="Yamamoto Y."/>
            <person name="Fujita K."/>
            <person name="Isono K."/>
            <person name="Choi S."/>
            <person name="Ohtsubo E."/>
            <person name="Baba T."/>
            <person name="Wanner B.L."/>
            <person name="Mori H."/>
            <person name="Horiuchi T."/>
        </authorList>
    </citation>
    <scope>NUCLEOTIDE SEQUENCE [LARGE SCALE GENOMIC DNA]</scope>
    <source>
        <strain>K12 / W3110 / ATCC 27325 / DSM 5911</strain>
    </source>
</reference>
<reference key="4">
    <citation type="journal article" date="1996" name="J. Biol. Chem.">
        <title>Glutaredoxin-3 from Escherichia coli. Amino acid sequence, 1H and 15N NMR assignments, and structural analysis.</title>
        <authorList>
            <person name="Aaslund F."/>
            <person name="Nordstrand K."/>
            <person name="Berndt K.D."/>
            <person name="Nikkola M."/>
            <person name="Bergman T."/>
            <person name="Ponsting H."/>
            <person name="Joernvall H."/>
            <person name="Otting G."/>
            <person name="Holmgren A."/>
        </authorList>
    </citation>
    <scope>PROTEIN SEQUENCE OF 2-83</scope>
</reference>
<reference key="5">
    <citation type="journal article" date="1994" name="Proc. Natl. Acad. Sci. U.S.A.">
        <title>Two additional glutaredoxins exist in Escherichia coli: glutaredoxin 3 is a hydrogen donor for ribonucleotide reductase in a thioredoxin/glutaredoxin 1 double mutant.</title>
        <authorList>
            <person name="Aaslund F."/>
            <person name="Ehn B."/>
            <person name="Miranda-Vizuete A."/>
            <person name="Pueyo C."/>
            <person name="Holmgren A."/>
        </authorList>
    </citation>
    <scope>PROTEIN SEQUENCE OF 2-21</scope>
    <scope>CHARACTERIZATION</scope>
</reference>
<reference key="6">
    <citation type="journal article" date="1999" name="J. Mol. Biol.">
        <title>NMR structure of Escherichia coli glutaredoxin 3-glutathione mixed disulfide complex: implications for the enzymatic mechanism.</title>
        <authorList>
            <person name="Nordstrand K."/>
            <person name="Aaslund F."/>
            <person name="Holmgren A."/>
            <person name="Otting G."/>
            <person name="Berndt K.D."/>
        </authorList>
    </citation>
    <scope>STRUCTURE BY NMR</scope>
</reference>
<reference key="7">
    <citation type="journal article" date="2000" name="J. Mol. Biol.">
        <title>NMR structure of oxidized glutaredoxin 3 from Escherichia coli.</title>
        <authorList>
            <person name="Nordstrand K."/>
            <person name="Sandstroem A."/>
            <person name="Aaslund F."/>
            <person name="Holmgren A."/>
            <person name="Otting G."/>
            <person name="Berndt K.D."/>
        </authorList>
    </citation>
    <scope>STRUCTURE BY NMR</scope>
</reference>
<name>GLRX3_ECOLI</name>
<feature type="initiator methionine" description="Removed" evidence="3 4">
    <location>
        <position position="1"/>
    </location>
</feature>
<feature type="chain" id="PRO_0000141588" description="Glutaredoxin 3">
    <location>
        <begin position="2"/>
        <end position="83"/>
    </location>
</feature>
<feature type="domain" description="Glutaredoxin" evidence="2">
    <location>
        <begin position="2"/>
        <end position="83"/>
    </location>
</feature>
<feature type="disulfide bond" description="Redox-active" evidence="1">
    <location>
        <begin position="12"/>
        <end position="15"/>
    </location>
</feature>
<feature type="strand" evidence="6">
    <location>
        <begin position="4"/>
        <end position="8"/>
    </location>
</feature>
<feature type="helix" evidence="6">
    <location>
        <begin position="13"/>
        <end position="25"/>
    </location>
</feature>
<feature type="strand" evidence="6">
    <location>
        <begin position="30"/>
        <end position="33"/>
    </location>
</feature>
<feature type="helix" evidence="6">
    <location>
        <begin position="39"/>
        <end position="48"/>
    </location>
</feature>
<feature type="strand" evidence="6">
    <location>
        <begin position="55"/>
        <end position="58"/>
    </location>
</feature>
<feature type="strand" evidence="6">
    <location>
        <begin position="61"/>
        <end position="65"/>
    </location>
</feature>
<feature type="helix" evidence="6">
    <location>
        <begin position="66"/>
        <end position="74"/>
    </location>
</feature>
<feature type="helix" evidence="6">
    <location>
        <begin position="79"/>
        <end position="82"/>
    </location>
</feature>